<evidence type="ECO:0000255" key="1">
    <source>
        <dbReference type="HAMAP-Rule" id="MF_01723"/>
    </source>
</evidence>
<evidence type="ECO:0000305" key="2"/>
<proteinExistence type="inferred from homology"/>
<protein>
    <recommendedName>
        <fullName evidence="1">Thiamine import ATP-binding protein ThiQ</fullName>
        <ecNumber evidence="1">7.6.2.15</ecNumber>
    </recommendedName>
</protein>
<organism>
    <name type="scientific">Escherichia coli (strain UTI89 / UPEC)</name>
    <dbReference type="NCBI Taxonomy" id="364106"/>
    <lineage>
        <taxon>Bacteria</taxon>
        <taxon>Pseudomonadati</taxon>
        <taxon>Pseudomonadota</taxon>
        <taxon>Gammaproteobacteria</taxon>
        <taxon>Enterobacterales</taxon>
        <taxon>Enterobacteriaceae</taxon>
        <taxon>Escherichia</taxon>
    </lineage>
</organism>
<dbReference type="EC" id="7.6.2.15" evidence="1"/>
<dbReference type="EMBL" id="CP000243">
    <property type="protein sequence ID" value="ABE05584.1"/>
    <property type="status" value="ALT_INIT"/>
    <property type="molecule type" value="Genomic_DNA"/>
</dbReference>
<dbReference type="RefSeq" id="WP_000916269.1">
    <property type="nucleotide sequence ID" value="NZ_CP064825.1"/>
</dbReference>
<dbReference type="SMR" id="Q1RGD0"/>
<dbReference type="KEGG" id="eci:UTI89_C0074"/>
<dbReference type="HOGENOM" id="CLU_000604_1_22_6"/>
<dbReference type="Proteomes" id="UP000001952">
    <property type="component" value="Chromosome"/>
</dbReference>
<dbReference type="GO" id="GO:0005886">
    <property type="term" value="C:plasma membrane"/>
    <property type="evidence" value="ECO:0007669"/>
    <property type="project" value="UniProtKB-SubCell"/>
</dbReference>
<dbReference type="GO" id="GO:0048502">
    <property type="term" value="F:ABC-type thiamine transporter activity"/>
    <property type="evidence" value="ECO:0007669"/>
    <property type="project" value="UniProtKB-EC"/>
</dbReference>
<dbReference type="GO" id="GO:0005524">
    <property type="term" value="F:ATP binding"/>
    <property type="evidence" value="ECO:0007669"/>
    <property type="project" value="UniProtKB-KW"/>
</dbReference>
<dbReference type="GO" id="GO:0016887">
    <property type="term" value="F:ATP hydrolysis activity"/>
    <property type="evidence" value="ECO:0007669"/>
    <property type="project" value="InterPro"/>
</dbReference>
<dbReference type="CDD" id="cd03298">
    <property type="entry name" value="ABC_ThiQ_thiamine_transporter"/>
    <property type="match status" value="1"/>
</dbReference>
<dbReference type="FunFam" id="3.40.50.300:FF:001071">
    <property type="entry name" value="Thiamine import ATP-binding protein ThiQ"/>
    <property type="match status" value="1"/>
</dbReference>
<dbReference type="Gene3D" id="3.40.50.300">
    <property type="entry name" value="P-loop containing nucleotide triphosphate hydrolases"/>
    <property type="match status" value="1"/>
</dbReference>
<dbReference type="InterPro" id="IPR003593">
    <property type="entry name" value="AAA+_ATPase"/>
</dbReference>
<dbReference type="InterPro" id="IPR050093">
    <property type="entry name" value="ABC_SmlMolc_Importer"/>
</dbReference>
<dbReference type="InterPro" id="IPR003439">
    <property type="entry name" value="ABC_transporter-like_ATP-bd"/>
</dbReference>
<dbReference type="InterPro" id="IPR017871">
    <property type="entry name" value="ABC_transporter-like_CS"/>
</dbReference>
<dbReference type="InterPro" id="IPR027417">
    <property type="entry name" value="P-loop_NTPase"/>
</dbReference>
<dbReference type="InterPro" id="IPR005968">
    <property type="entry name" value="Thiamine_ABC_ThiQ"/>
</dbReference>
<dbReference type="NCBIfam" id="NF008039">
    <property type="entry name" value="PRK10771.1"/>
    <property type="match status" value="1"/>
</dbReference>
<dbReference type="NCBIfam" id="TIGR01277">
    <property type="entry name" value="thiQ"/>
    <property type="match status" value="1"/>
</dbReference>
<dbReference type="PANTHER" id="PTHR42781">
    <property type="entry name" value="SPERMIDINE/PUTRESCINE IMPORT ATP-BINDING PROTEIN POTA"/>
    <property type="match status" value="1"/>
</dbReference>
<dbReference type="PANTHER" id="PTHR42781:SF1">
    <property type="entry name" value="THIAMINE IMPORT ATP-BINDING PROTEIN THIQ"/>
    <property type="match status" value="1"/>
</dbReference>
<dbReference type="Pfam" id="PF00005">
    <property type="entry name" value="ABC_tran"/>
    <property type="match status" value="1"/>
</dbReference>
<dbReference type="SMART" id="SM00382">
    <property type="entry name" value="AAA"/>
    <property type="match status" value="1"/>
</dbReference>
<dbReference type="SUPFAM" id="SSF52540">
    <property type="entry name" value="P-loop containing nucleoside triphosphate hydrolases"/>
    <property type="match status" value="1"/>
</dbReference>
<dbReference type="PROSITE" id="PS00211">
    <property type="entry name" value="ABC_TRANSPORTER_1"/>
    <property type="match status" value="1"/>
</dbReference>
<dbReference type="PROSITE" id="PS50893">
    <property type="entry name" value="ABC_TRANSPORTER_2"/>
    <property type="match status" value="1"/>
</dbReference>
<dbReference type="PROSITE" id="PS51288">
    <property type="entry name" value="THIQ"/>
    <property type="match status" value="1"/>
</dbReference>
<name>THIQ_ECOUT</name>
<feature type="chain" id="PRO_0000274438" description="Thiamine import ATP-binding protein ThiQ">
    <location>
        <begin position="1"/>
        <end position="232"/>
    </location>
</feature>
<feature type="domain" description="ABC transporter" evidence="1">
    <location>
        <begin position="2"/>
        <end position="230"/>
    </location>
</feature>
<feature type="binding site" evidence="1">
    <location>
        <begin position="32"/>
        <end position="39"/>
    </location>
    <ligand>
        <name>ATP</name>
        <dbReference type="ChEBI" id="CHEBI:30616"/>
    </ligand>
</feature>
<comment type="function">
    <text evidence="1">Part of the ABC transporter complex ThiBPQ involved in thiamine import. Responsible for energy coupling to the transport system.</text>
</comment>
<comment type="catalytic activity">
    <reaction evidence="1">
        <text>thiamine(out) + ATP + H2O = thiamine(in) + ADP + phosphate + H(+)</text>
        <dbReference type="Rhea" id="RHEA:29811"/>
        <dbReference type="ChEBI" id="CHEBI:15377"/>
        <dbReference type="ChEBI" id="CHEBI:15378"/>
        <dbReference type="ChEBI" id="CHEBI:18385"/>
        <dbReference type="ChEBI" id="CHEBI:30616"/>
        <dbReference type="ChEBI" id="CHEBI:43474"/>
        <dbReference type="ChEBI" id="CHEBI:456216"/>
        <dbReference type="EC" id="7.6.2.15"/>
    </reaction>
</comment>
<comment type="subunit">
    <text evidence="1">The complex is composed of two ATP-binding proteins (ThiQ), two transmembrane proteins (ThiP) and a solute-binding protein (ThiB).</text>
</comment>
<comment type="subcellular location">
    <subcellularLocation>
        <location evidence="1">Cell inner membrane</location>
        <topology evidence="1">Peripheral membrane protein</topology>
    </subcellularLocation>
</comment>
<comment type="similarity">
    <text evidence="1">Belongs to the ABC transporter superfamily. Thiamine importer (TC 3.A.1.19.1) family.</text>
</comment>
<comment type="sequence caution" evidence="2">
    <conflict type="erroneous initiation">
        <sequence resource="EMBL-CDS" id="ABE05584"/>
    </conflict>
</comment>
<sequence length="232" mass="25088">MLKLTDITWLYHHLPMRFSLTVERGEQVAILGPSGAGKSTLLNLIAGFLTPASGLLTIDDVDHTTTPPSRRPVSMLFQENNLFSHLTVAQNIGLGLNPGLKLNAAQQKKMHAIAHQMGIDNLMARLPGELSGGQRQRVALARCLVREQPILLLDEPFSALDPALRQEMLTLVSSSCQQQKMTLLMVSHSVEDAARIATRSVVVADGRIAWQGKTDELLSGKASASALLGIKG</sequence>
<gene>
    <name evidence="1" type="primary">thiQ</name>
    <name type="ordered locus">UTI89_C0074</name>
</gene>
<accession>Q1RGD0</accession>
<keyword id="KW-0067">ATP-binding</keyword>
<keyword id="KW-0997">Cell inner membrane</keyword>
<keyword id="KW-1003">Cell membrane</keyword>
<keyword id="KW-0472">Membrane</keyword>
<keyword id="KW-0547">Nucleotide-binding</keyword>
<keyword id="KW-1278">Translocase</keyword>
<keyword id="KW-0813">Transport</keyword>
<reference key="1">
    <citation type="journal article" date="2006" name="Proc. Natl. Acad. Sci. U.S.A.">
        <title>Identification of genes subject to positive selection in uropathogenic strains of Escherichia coli: a comparative genomics approach.</title>
        <authorList>
            <person name="Chen S.L."/>
            <person name="Hung C.-S."/>
            <person name="Xu J."/>
            <person name="Reigstad C.S."/>
            <person name="Magrini V."/>
            <person name="Sabo A."/>
            <person name="Blasiar D."/>
            <person name="Bieri T."/>
            <person name="Meyer R.R."/>
            <person name="Ozersky P."/>
            <person name="Armstrong J.R."/>
            <person name="Fulton R.S."/>
            <person name="Latreille J.P."/>
            <person name="Spieth J."/>
            <person name="Hooton T.M."/>
            <person name="Mardis E.R."/>
            <person name="Hultgren S.J."/>
            <person name="Gordon J.I."/>
        </authorList>
    </citation>
    <scope>NUCLEOTIDE SEQUENCE [LARGE SCALE GENOMIC DNA]</scope>
    <source>
        <strain>UTI89 / UPEC</strain>
    </source>
</reference>